<comment type="function">
    <text>Is probably a Ser/Thr-protein kinase that may function in initiation of DNA synthesis and also in late nuclear division.</text>
</comment>
<comment type="catalytic activity">
    <reaction>
        <text>L-seryl-[protein] + ATP = O-phospho-L-seryl-[protein] + ADP + H(+)</text>
        <dbReference type="Rhea" id="RHEA:17989"/>
        <dbReference type="Rhea" id="RHEA-COMP:9863"/>
        <dbReference type="Rhea" id="RHEA-COMP:11604"/>
        <dbReference type="ChEBI" id="CHEBI:15378"/>
        <dbReference type="ChEBI" id="CHEBI:29999"/>
        <dbReference type="ChEBI" id="CHEBI:30616"/>
        <dbReference type="ChEBI" id="CHEBI:83421"/>
        <dbReference type="ChEBI" id="CHEBI:456216"/>
        <dbReference type="EC" id="2.7.11.1"/>
    </reaction>
</comment>
<comment type="catalytic activity">
    <reaction>
        <text>L-threonyl-[protein] + ATP = O-phospho-L-threonyl-[protein] + ADP + H(+)</text>
        <dbReference type="Rhea" id="RHEA:46608"/>
        <dbReference type="Rhea" id="RHEA-COMP:11060"/>
        <dbReference type="Rhea" id="RHEA-COMP:11605"/>
        <dbReference type="ChEBI" id="CHEBI:15378"/>
        <dbReference type="ChEBI" id="CHEBI:30013"/>
        <dbReference type="ChEBI" id="CHEBI:30616"/>
        <dbReference type="ChEBI" id="CHEBI:61977"/>
        <dbReference type="ChEBI" id="CHEBI:456216"/>
        <dbReference type="EC" id="2.7.11.1"/>
    </reaction>
</comment>
<comment type="interaction">
    <interactant intactId="EBI-5588">
        <id>P32328</id>
    </interactant>
    <interactant intactId="EBI-11119">
        <id>P40484</id>
        <label>MOB1</label>
    </interactant>
    <organismsDiffer>false</organismsDiffer>
    <experiments>8</experiments>
</comment>
<comment type="miscellaneous">
    <text evidence="6">Present with 3320 molecules/cell in log phase SD medium.</text>
</comment>
<comment type="similarity">
    <text evidence="2">Belongs to the protein kinase superfamily. Ser/Thr protein kinase family.</text>
</comment>
<keyword id="KW-0067">ATP-binding</keyword>
<keyword id="KW-0418">Kinase</keyword>
<keyword id="KW-0547">Nucleotide-binding</keyword>
<keyword id="KW-0597">Phosphoprotein</keyword>
<keyword id="KW-1185">Reference proteome</keyword>
<keyword id="KW-0723">Serine/threonine-protein kinase</keyword>
<keyword id="KW-0808">Transferase</keyword>
<organism>
    <name type="scientific">Saccharomyces cerevisiae (strain ATCC 204508 / S288c)</name>
    <name type="common">Baker's yeast</name>
    <dbReference type="NCBI Taxonomy" id="559292"/>
    <lineage>
        <taxon>Eukaryota</taxon>
        <taxon>Fungi</taxon>
        <taxon>Dikarya</taxon>
        <taxon>Ascomycota</taxon>
        <taxon>Saccharomycotina</taxon>
        <taxon>Saccharomycetes</taxon>
        <taxon>Saccharomycetales</taxon>
        <taxon>Saccharomycetaceae</taxon>
        <taxon>Saccharomyces</taxon>
    </lineage>
</organism>
<gene>
    <name type="primary">DBF20</name>
    <name type="ordered locus">YPR111W</name>
</gene>
<reference key="1">
    <citation type="journal article" date="1991" name="Gene">
        <title>The cell-cycle-regulated budding yeast gene DBF2, encoding a putative protein kinase, has a homologue that is not under cell-cycle control.</title>
        <authorList>
            <person name="Toyn J.H."/>
            <person name="Araki H."/>
            <person name="Sugino A."/>
            <person name="Johnston L.H."/>
        </authorList>
    </citation>
    <scope>NUCLEOTIDE SEQUENCE [GENOMIC DNA]</scope>
</reference>
<reference key="2">
    <citation type="journal article" date="1997" name="Nature">
        <title>The nucleotide sequence of Saccharomyces cerevisiae chromosome XVI.</title>
        <authorList>
            <person name="Bussey H."/>
            <person name="Storms R.K."/>
            <person name="Ahmed A."/>
            <person name="Albermann K."/>
            <person name="Allen E."/>
            <person name="Ansorge W."/>
            <person name="Araujo R."/>
            <person name="Aparicio A."/>
            <person name="Barrell B.G."/>
            <person name="Badcock K."/>
            <person name="Benes V."/>
            <person name="Botstein D."/>
            <person name="Bowman S."/>
            <person name="Brueckner M."/>
            <person name="Carpenter J."/>
            <person name="Cherry J.M."/>
            <person name="Chung E."/>
            <person name="Churcher C.M."/>
            <person name="Coster F."/>
            <person name="Davis K."/>
            <person name="Davis R.W."/>
            <person name="Dietrich F.S."/>
            <person name="Delius H."/>
            <person name="DiPaolo T."/>
            <person name="Dubois E."/>
            <person name="Duesterhoeft A."/>
            <person name="Duncan M."/>
            <person name="Floeth M."/>
            <person name="Fortin N."/>
            <person name="Friesen J.D."/>
            <person name="Fritz C."/>
            <person name="Goffeau A."/>
            <person name="Hall J."/>
            <person name="Hebling U."/>
            <person name="Heumann K."/>
            <person name="Hilbert H."/>
            <person name="Hillier L.W."/>
            <person name="Hunicke-Smith S."/>
            <person name="Hyman R.W."/>
            <person name="Johnston M."/>
            <person name="Kalman S."/>
            <person name="Kleine K."/>
            <person name="Komp C."/>
            <person name="Kurdi O."/>
            <person name="Lashkari D."/>
            <person name="Lew H."/>
            <person name="Lin A."/>
            <person name="Lin D."/>
            <person name="Louis E.J."/>
            <person name="Marathe R."/>
            <person name="Messenguy F."/>
            <person name="Mewes H.-W."/>
            <person name="Mirtipati S."/>
            <person name="Moestl D."/>
            <person name="Mueller-Auer S."/>
            <person name="Namath A."/>
            <person name="Nentwich U."/>
            <person name="Oefner P."/>
            <person name="Pearson D."/>
            <person name="Petel F.X."/>
            <person name="Pohl T.M."/>
            <person name="Purnelle B."/>
            <person name="Rajandream M.A."/>
            <person name="Rechmann S."/>
            <person name="Rieger M."/>
            <person name="Riles L."/>
            <person name="Roberts D."/>
            <person name="Schaefer M."/>
            <person name="Scharfe M."/>
            <person name="Scherens B."/>
            <person name="Schramm S."/>
            <person name="Schroeder M."/>
            <person name="Sdicu A.-M."/>
            <person name="Tettelin H."/>
            <person name="Urrestarazu L.A."/>
            <person name="Ushinsky S."/>
            <person name="Vierendeels F."/>
            <person name="Vissers S."/>
            <person name="Voss H."/>
            <person name="Walsh S.V."/>
            <person name="Wambutt R."/>
            <person name="Wang Y."/>
            <person name="Wedler E."/>
            <person name="Wedler H."/>
            <person name="Winnett E."/>
            <person name="Zhong W.-W."/>
            <person name="Zollner A."/>
            <person name="Vo D.H."/>
            <person name="Hani J."/>
        </authorList>
    </citation>
    <scope>NUCLEOTIDE SEQUENCE [LARGE SCALE GENOMIC DNA]</scope>
    <source>
        <strain>ATCC 204508 / S288c</strain>
    </source>
</reference>
<reference key="3">
    <citation type="journal article" date="2014" name="G3 (Bethesda)">
        <title>The reference genome sequence of Saccharomyces cerevisiae: Then and now.</title>
        <authorList>
            <person name="Engel S.R."/>
            <person name="Dietrich F.S."/>
            <person name="Fisk D.G."/>
            <person name="Binkley G."/>
            <person name="Balakrishnan R."/>
            <person name="Costanzo M.C."/>
            <person name="Dwight S.S."/>
            <person name="Hitz B.C."/>
            <person name="Karra K."/>
            <person name="Nash R.S."/>
            <person name="Weng S."/>
            <person name="Wong E.D."/>
            <person name="Lloyd P."/>
            <person name="Skrzypek M.S."/>
            <person name="Miyasato S.R."/>
            <person name="Simison M."/>
            <person name="Cherry J.M."/>
        </authorList>
    </citation>
    <scope>GENOME REANNOTATION</scope>
    <source>
        <strain>ATCC 204508 / S288c</strain>
    </source>
</reference>
<reference key="4">
    <citation type="journal article" date="2007" name="Genome Res.">
        <title>Approaching a complete repository of sequence-verified protein-encoding clones for Saccharomyces cerevisiae.</title>
        <authorList>
            <person name="Hu Y."/>
            <person name="Rolfs A."/>
            <person name="Bhullar B."/>
            <person name="Murthy T.V.S."/>
            <person name="Zhu C."/>
            <person name="Berger M.F."/>
            <person name="Camargo A.A."/>
            <person name="Kelley F."/>
            <person name="McCarron S."/>
            <person name="Jepson D."/>
            <person name="Richardson A."/>
            <person name="Raphael J."/>
            <person name="Moreira D."/>
            <person name="Taycher E."/>
            <person name="Zuo D."/>
            <person name="Mohr S."/>
            <person name="Kane M.F."/>
            <person name="Williamson J."/>
            <person name="Simpson A.J.G."/>
            <person name="Bulyk M.L."/>
            <person name="Harlow E."/>
            <person name="Marsischky G."/>
            <person name="Kolodner R.D."/>
            <person name="LaBaer J."/>
        </authorList>
    </citation>
    <scope>NUCLEOTIDE SEQUENCE [GENOMIC DNA]</scope>
    <source>
        <strain>ATCC 204508 / S288c</strain>
    </source>
</reference>
<reference key="5">
    <citation type="journal article" date="2003" name="Nature">
        <title>Global analysis of protein expression in yeast.</title>
        <authorList>
            <person name="Ghaemmaghami S."/>
            <person name="Huh W.-K."/>
            <person name="Bower K."/>
            <person name="Howson R.W."/>
            <person name="Belle A."/>
            <person name="Dephoure N."/>
            <person name="O'Shea E.K."/>
            <person name="Weissman J.S."/>
        </authorList>
    </citation>
    <scope>LEVEL OF PROTEIN EXPRESSION [LARGE SCALE ANALYSIS]</scope>
</reference>
<reference key="6">
    <citation type="journal article" date="2007" name="Proc. Natl. Acad. Sci. U.S.A.">
        <title>Analysis of phosphorylation sites on proteins from Saccharomyces cerevisiae by electron transfer dissociation (ETD) mass spectrometry.</title>
        <authorList>
            <person name="Chi A."/>
            <person name="Huttenhower C."/>
            <person name="Geer L.Y."/>
            <person name="Coon J.J."/>
            <person name="Syka J.E.P."/>
            <person name="Bai D.L."/>
            <person name="Shabanowitz J."/>
            <person name="Burke D.J."/>
            <person name="Troyanskaya O.G."/>
            <person name="Hunt D.F."/>
        </authorList>
    </citation>
    <scope>IDENTIFICATION BY MASS SPECTROMETRY [LARGE SCALE ANALYSIS]</scope>
</reference>
<reference key="7">
    <citation type="journal article" date="2008" name="Mol. Cell. Proteomics">
        <title>A multidimensional chromatography technology for in-depth phosphoproteome analysis.</title>
        <authorList>
            <person name="Albuquerque C.P."/>
            <person name="Smolka M.B."/>
            <person name="Payne S.H."/>
            <person name="Bafna V."/>
            <person name="Eng J."/>
            <person name="Zhou H."/>
        </authorList>
    </citation>
    <scope>PHOSPHORYLATION [LARGE SCALE ANALYSIS] AT SER-366</scope>
    <scope>IDENTIFICATION BY MASS SPECTROMETRY [LARGE SCALE ANALYSIS]</scope>
</reference>
<reference key="8">
    <citation type="journal article" date="2009" name="Science">
        <title>Global analysis of Cdk1 substrate phosphorylation sites provides insights into evolution.</title>
        <authorList>
            <person name="Holt L.J."/>
            <person name="Tuch B.B."/>
            <person name="Villen J."/>
            <person name="Johnson A.D."/>
            <person name="Gygi S.P."/>
            <person name="Morgan D.O."/>
        </authorList>
    </citation>
    <scope>IDENTIFICATION BY MASS SPECTROMETRY [LARGE SCALE ANALYSIS]</scope>
</reference>
<feature type="chain" id="PRO_0000085917" description="Serine/threonine-protein kinase DBF20">
    <location>
        <begin position="1"/>
        <end position="564"/>
    </location>
</feature>
<feature type="domain" description="Protein kinase" evidence="2">
    <location>
        <begin position="169"/>
        <end position="469"/>
    </location>
</feature>
<feature type="domain" description="AGC-kinase C-terminal" evidence="3">
    <location>
        <begin position="470"/>
        <end position="547"/>
    </location>
</feature>
<feature type="region of interest" description="Disordered" evidence="5">
    <location>
        <begin position="24"/>
        <end position="62"/>
    </location>
</feature>
<feature type="active site" description="Proton acceptor" evidence="2 4">
    <location>
        <position position="292"/>
    </location>
</feature>
<feature type="binding site" evidence="2">
    <location>
        <begin position="175"/>
        <end position="183"/>
    </location>
    <ligand>
        <name>ATP</name>
        <dbReference type="ChEBI" id="CHEBI:30616"/>
    </ligand>
</feature>
<feature type="binding site" evidence="2">
    <location>
        <position position="198"/>
    </location>
    <ligand>
        <name>ATP</name>
        <dbReference type="ChEBI" id="CHEBI:30616"/>
    </ligand>
</feature>
<feature type="modified residue" description="Phosphoserine" evidence="1">
    <location>
        <position position="17"/>
    </location>
</feature>
<feature type="modified residue" description="Phosphoserine" evidence="8">
    <location>
        <position position="366"/>
    </location>
</feature>
<feature type="modified residue" description="Phosphothreonine" evidence="1">
    <location>
        <position position="536"/>
    </location>
</feature>
<feature type="sequence conflict" description="In Ref. 4; AAT92874." evidence="7" ref="4">
    <original>K</original>
    <variation>E</variation>
    <location>
        <position position="81"/>
    </location>
</feature>
<feature type="sequence conflict" description="In Ref. 1; AAB05204." evidence="7" ref="1">
    <original>E</original>
    <variation>Q</variation>
    <location>
        <position position="337"/>
    </location>
</feature>
<feature type="sequence conflict" description="In Ref. 1; AAB05204." evidence="7" ref="1">
    <original>R</original>
    <variation>S</variation>
    <location>
        <position position="350"/>
    </location>
</feature>
<protein>
    <recommendedName>
        <fullName>Serine/threonine-protein kinase DBF20</fullName>
        <ecNumber>2.7.11.1</ecNumber>
    </recommendedName>
</protein>
<sequence length="564" mass="65880">MFSRSDREVDDLAGNMSHLGFYDLNIPKPTSPQAQYRPARKSENGRLTPGLPRSYKPCDSDDQDTFKNRISLNHSPKKLPKDFHERASQSKTQRVVNVCQLYFLDYYCDMFDYVISRRQRTKQVLRYLEQQRSVKNVSNKVLNEEWALYLQREHEVLRKRRLKPKHKDFQILTQVGQGGYGQVYLAKKKDSDEICALKILNKKLLFKLNETNHVLTERDILTTTRSDWLVKLLYAFQDPESLYLAMEFVPGGDFRTLLINTRILKSGHARFYISEMFCAVNALHELGYTHRDLKPENFLIDATGHIKLTDFGLAAGTVSNERIESMKIRLEEVKNLEFPAFTERSIEDRRKIYHNMRKTEINYANSMVGSPDYMALEVLEGKKYDFTVDYWSLGCMLFESLVGYTPFSGSSTNETYENLRYWKKTLRRPRTEDRRAAFSDRTWDLITRLIADPINRVRSFEQVRKMSYFAEINFETLRTSSPPFIPQLDDETDAGYFDDFTNEEDMAKYADVFKRQNKLSAMVDDSAVDSKLVGFTFRHRDGKQGSSGILYNGSEHSDPFSTFY</sequence>
<name>DBF20_YEAST</name>
<accession>P32328</accession>
<accession>D6W4B0</accession>
<accession>E9P8X8</accession>
<accession>Q06105</accession>
<dbReference type="EC" id="2.7.11.1"/>
<dbReference type="EMBL" id="M62506">
    <property type="protein sequence ID" value="AAB05204.1"/>
    <property type="molecule type" value="Genomic_DNA"/>
</dbReference>
<dbReference type="EMBL" id="U32445">
    <property type="protein sequence ID" value="AAB68081.1"/>
    <property type="molecule type" value="Genomic_DNA"/>
</dbReference>
<dbReference type="EMBL" id="AY692855">
    <property type="protein sequence ID" value="AAT92874.1"/>
    <property type="molecule type" value="Genomic_DNA"/>
</dbReference>
<dbReference type="EMBL" id="BK006949">
    <property type="protein sequence ID" value="DAA11526.1"/>
    <property type="molecule type" value="Genomic_DNA"/>
</dbReference>
<dbReference type="PIR" id="S59776">
    <property type="entry name" value="S59776"/>
</dbReference>
<dbReference type="RefSeq" id="NP_015436.1">
    <property type="nucleotide sequence ID" value="NM_001184208.1"/>
</dbReference>
<dbReference type="SMR" id="P32328"/>
<dbReference type="BioGRID" id="36278">
    <property type="interactions" value="74"/>
</dbReference>
<dbReference type="ComplexPortal" id="CPX-5341">
    <property type="entry name" value="DBF20-MOB1 kinase complex"/>
</dbReference>
<dbReference type="DIP" id="DIP-3817N"/>
<dbReference type="FunCoup" id="P32328">
    <property type="interactions" value="283"/>
</dbReference>
<dbReference type="IntAct" id="P32328">
    <property type="interactions" value="34"/>
</dbReference>
<dbReference type="MINT" id="P32328"/>
<dbReference type="STRING" id="4932.YPR111W"/>
<dbReference type="iPTMnet" id="P32328"/>
<dbReference type="PaxDb" id="4932-YPR111W"/>
<dbReference type="PeptideAtlas" id="P32328"/>
<dbReference type="EnsemblFungi" id="YPR111W_mRNA">
    <property type="protein sequence ID" value="YPR111W"/>
    <property type="gene ID" value="YPR111W"/>
</dbReference>
<dbReference type="GeneID" id="856227"/>
<dbReference type="KEGG" id="sce:YPR111W"/>
<dbReference type="AGR" id="SGD:S000006315"/>
<dbReference type="SGD" id="S000006315">
    <property type="gene designation" value="DBF20"/>
</dbReference>
<dbReference type="VEuPathDB" id="FungiDB:YPR111W"/>
<dbReference type="eggNOG" id="KOG0605">
    <property type="taxonomic scope" value="Eukaryota"/>
</dbReference>
<dbReference type="GeneTree" id="ENSGT00940000176430"/>
<dbReference type="HOGENOM" id="CLU_000288_67_4_1"/>
<dbReference type="InParanoid" id="P32328"/>
<dbReference type="OMA" id="TVCNDRI"/>
<dbReference type="OrthoDB" id="18472at2759"/>
<dbReference type="BioCyc" id="YEAST:G3O-34251-MONOMER"/>
<dbReference type="BRENDA" id="2.7.11.1">
    <property type="organism ID" value="984"/>
</dbReference>
<dbReference type="BioGRID-ORCS" id="856227">
    <property type="hits" value="0 hits in 13 CRISPR screens"/>
</dbReference>
<dbReference type="PRO" id="PR:P32328"/>
<dbReference type="Proteomes" id="UP000002311">
    <property type="component" value="Chromosome XVI"/>
</dbReference>
<dbReference type="RNAct" id="P32328">
    <property type="molecule type" value="protein"/>
</dbReference>
<dbReference type="GO" id="GO:0005935">
    <property type="term" value="C:cellular bud neck"/>
    <property type="evidence" value="ECO:0000314"/>
    <property type="project" value="SGD"/>
</dbReference>
<dbReference type="GO" id="GO:0005737">
    <property type="term" value="C:cytoplasm"/>
    <property type="evidence" value="ECO:0007005"/>
    <property type="project" value="SGD"/>
</dbReference>
<dbReference type="GO" id="GO:1902554">
    <property type="term" value="C:serine/threonine protein kinase complex"/>
    <property type="evidence" value="ECO:0000353"/>
    <property type="project" value="ComplexPortal"/>
</dbReference>
<dbReference type="GO" id="GO:0005816">
    <property type="term" value="C:spindle pole body"/>
    <property type="evidence" value="ECO:0000314"/>
    <property type="project" value="SGD"/>
</dbReference>
<dbReference type="GO" id="GO:0005524">
    <property type="term" value="F:ATP binding"/>
    <property type="evidence" value="ECO:0007669"/>
    <property type="project" value="UniProtKB-KW"/>
</dbReference>
<dbReference type="GO" id="GO:0106310">
    <property type="term" value="F:protein serine kinase activity"/>
    <property type="evidence" value="ECO:0007669"/>
    <property type="project" value="RHEA"/>
</dbReference>
<dbReference type="GO" id="GO:0004674">
    <property type="term" value="F:protein serine/threonine kinase activity"/>
    <property type="evidence" value="ECO:0000314"/>
    <property type="project" value="SGD"/>
</dbReference>
<dbReference type="GO" id="GO:0000917">
    <property type="term" value="P:division septum assembly"/>
    <property type="evidence" value="ECO:0000315"/>
    <property type="project" value="SGD"/>
</dbReference>
<dbReference type="GO" id="GO:0010458">
    <property type="term" value="P:exit from mitosis"/>
    <property type="evidence" value="ECO:0000316"/>
    <property type="project" value="SGD"/>
</dbReference>
<dbReference type="GO" id="GO:0035556">
    <property type="term" value="P:intracellular signal transduction"/>
    <property type="evidence" value="ECO:0000318"/>
    <property type="project" value="GO_Central"/>
</dbReference>
<dbReference type="GO" id="GO:0000281">
    <property type="term" value="P:mitotic cytokinesis"/>
    <property type="evidence" value="ECO:0000316"/>
    <property type="project" value="SGD"/>
</dbReference>
<dbReference type="GO" id="GO:0032465">
    <property type="term" value="P:regulation of cytokinesis"/>
    <property type="evidence" value="ECO:0000250"/>
    <property type="project" value="ComplexPortal"/>
</dbReference>
<dbReference type="GO" id="GO:0061013">
    <property type="term" value="P:regulation of mRNA catabolic process"/>
    <property type="evidence" value="ECO:0000315"/>
    <property type="project" value="SGD"/>
</dbReference>
<dbReference type="CDD" id="cd21776">
    <property type="entry name" value="MobB_Sid2p-like"/>
    <property type="match status" value="1"/>
</dbReference>
<dbReference type="CDD" id="cd05600">
    <property type="entry name" value="STKc_Sid2p_like"/>
    <property type="match status" value="1"/>
</dbReference>
<dbReference type="FunFam" id="1.10.510.10:FF:000141">
    <property type="entry name" value="Non-specific serine/threonine protein kinase"/>
    <property type="match status" value="1"/>
</dbReference>
<dbReference type="FunFam" id="1.10.510.10:FF:000319">
    <property type="entry name" value="Non-specific serine/threonine protein kinase"/>
    <property type="match status" value="1"/>
</dbReference>
<dbReference type="FunFam" id="3.30.200.20:FF:000109">
    <property type="entry name" value="Non-specific serine/threonine protein kinase"/>
    <property type="match status" value="1"/>
</dbReference>
<dbReference type="Gene3D" id="3.30.200.20">
    <property type="entry name" value="Phosphorylase Kinase, domain 1"/>
    <property type="match status" value="2"/>
</dbReference>
<dbReference type="Gene3D" id="1.10.510.10">
    <property type="entry name" value="Transferase(Phosphotransferase) domain 1"/>
    <property type="match status" value="2"/>
</dbReference>
<dbReference type="InterPro" id="IPR000961">
    <property type="entry name" value="AGC-kinase_C"/>
</dbReference>
<dbReference type="InterPro" id="IPR011009">
    <property type="entry name" value="Kinase-like_dom_sf"/>
</dbReference>
<dbReference type="InterPro" id="IPR017892">
    <property type="entry name" value="Pkinase_C"/>
</dbReference>
<dbReference type="InterPro" id="IPR000719">
    <property type="entry name" value="Prot_kinase_dom"/>
</dbReference>
<dbReference type="InterPro" id="IPR017441">
    <property type="entry name" value="Protein_kinase_ATP_BS"/>
</dbReference>
<dbReference type="InterPro" id="IPR008271">
    <property type="entry name" value="Ser/Thr_kinase_AS"/>
</dbReference>
<dbReference type="InterPro" id="IPR050236">
    <property type="entry name" value="Ser_Thr_kinase_AGC"/>
</dbReference>
<dbReference type="PANTHER" id="PTHR24356:SF417">
    <property type="entry name" value="CELL CYCLE PROTEIN KINASE DBF2-RELATED"/>
    <property type="match status" value="1"/>
</dbReference>
<dbReference type="PANTHER" id="PTHR24356">
    <property type="entry name" value="SERINE/THREONINE-PROTEIN KINASE"/>
    <property type="match status" value="1"/>
</dbReference>
<dbReference type="Pfam" id="PF00069">
    <property type="entry name" value="Pkinase"/>
    <property type="match status" value="2"/>
</dbReference>
<dbReference type="Pfam" id="PF00433">
    <property type="entry name" value="Pkinase_C"/>
    <property type="match status" value="1"/>
</dbReference>
<dbReference type="SMART" id="SM00133">
    <property type="entry name" value="S_TK_X"/>
    <property type="match status" value="1"/>
</dbReference>
<dbReference type="SMART" id="SM00220">
    <property type="entry name" value="S_TKc"/>
    <property type="match status" value="1"/>
</dbReference>
<dbReference type="SUPFAM" id="SSF56112">
    <property type="entry name" value="Protein kinase-like (PK-like)"/>
    <property type="match status" value="1"/>
</dbReference>
<dbReference type="PROSITE" id="PS51285">
    <property type="entry name" value="AGC_KINASE_CTER"/>
    <property type="match status" value="1"/>
</dbReference>
<dbReference type="PROSITE" id="PS00107">
    <property type="entry name" value="PROTEIN_KINASE_ATP"/>
    <property type="match status" value="1"/>
</dbReference>
<dbReference type="PROSITE" id="PS50011">
    <property type="entry name" value="PROTEIN_KINASE_DOM"/>
    <property type="match status" value="1"/>
</dbReference>
<dbReference type="PROSITE" id="PS00108">
    <property type="entry name" value="PROTEIN_KINASE_ST"/>
    <property type="match status" value="1"/>
</dbReference>
<evidence type="ECO:0000250" key="1">
    <source>
        <dbReference type="UniProtKB" id="P22204"/>
    </source>
</evidence>
<evidence type="ECO:0000255" key="2">
    <source>
        <dbReference type="PROSITE-ProRule" id="PRU00159"/>
    </source>
</evidence>
<evidence type="ECO:0000255" key="3">
    <source>
        <dbReference type="PROSITE-ProRule" id="PRU00618"/>
    </source>
</evidence>
<evidence type="ECO:0000255" key="4">
    <source>
        <dbReference type="PROSITE-ProRule" id="PRU10027"/>
    </source>
</evidence>
<evidence type="ECO:0000256" key="5">
    <source>
        <dbReference type="SAM" id="MobiDB-lite"/>
    </source>
</evidence>
<evidence type="ECO:0000269" key="6">
    <source>
    </source>
</evidence>
<evidence type="ECO:0000305" key="7"/>
<evidence type="ECO:0007744" key="8">
    <source>
    </source>
</evidence>
<proteinExistence type="evidence at protein level"/>